<protein>
    <recommendedName>
        <fullName evidence="1">NADH-quinone oxidoreductase subunit B 2</fullName>
        <ecNumber evidence="1">7.1.1.-</ecNumber>
    </recommendedName>
    <alternativeName>
        <fullName evidence="1">NADH dehydrogenase I subunit B 2</fullName>
    </alternativeName>
    <alternativeName>
        <fullName evidence="1">NDH-1 subunit B 2</fullName>
    </alternativeName>
</protein>
<evidence type="ECO:0000255" key="1">
    <source>
        <dbReference type="HAMAP-Rule" id="MF_01356"/>
    </source>
</evidence>
<gene>
    <name evidence="1" type="primary">nuoB2</name>
    <name type="ordered locus">STH2777</name>
</gene>
<organism>
    <name type="scientific">Symbiobacterium thermophilum (strain DSM 24528 / JCM 14929 / IAM 14863 / T)</name>
    <dbReference type="NCBI Taxonomy" id="292459"/>
    <lineage>
        <taxon>Bacteria</taxon>
        <taxon>Bacillati</taxon>
        <taxon>Bacillota</taxon>
        <taxon>Clostridia</taxon>
        <taxon>Eubacteriales</taxon>
        <taxon>Symbiobacteriaceae</taxon>
        <taxon>Symbiobacterium</taxon>
    </lineage>
</organism>
<reference key="1">
    <citation type="journal article" date="2004" name="Nucleic Acids Res.">
        <title>Genome sequence of Symbiobacterium thermophilum, an uncultivable bacterium that depends on microbial commensalism.</title>
        <authorList>
            <person name="Ueda K."/>
            <person name="Yamashita A."/>
            <person name="Ishikawa J."/>
            <person name="Shimada M."/>
            <person name="Watsuji T."/>
            <person name="Morimura K."/>
            <person name="Ikeda H."/>
            <person name="Hattori M."/>
            <person name="Beppu T."/>
        </authorList>
    </citation>
    <scope>NUCLEOTIDE SEQUENCE [LARGE SCALE GENOMIC DNA]</scope>
    <source>
        <strain>DSM 24528 / JCM 14929 / IAM 14863 / T</strain>
    </source>
</reference>
<sequence>MSQARHELDWLNDEVVVSEIDVVNENVIAGKLPDVIKKVLGWGYGNSTWPLGFGIACCAIEMMAACSSKYDIARFGSEAMRMSPRQADVMIVAGTVNEKMAVVVRRLYDQMSEPKFVIAMGACASNGGPYWDTYNVVDGVHKVVPVDVYVPGCPPRPEALLQGLMEIQEMIKTGKRGLITKG</sequence>
<name>NUOB2_SYMTH</name>
<dbReference type="EC" id="7.1.1.-" evidence="1"/>
<dbReference type="EMBL" id="AP006840">
    <property type="protein sequence ID" value="BAD41762.1"/>
    <property type="molecule type" value="Genomic_DNA"/>
</dbReference>
<dbReference type="SMR" id="Q67KN6"/>
<dbReference type="STRING" id="292459.STH2777"/>
<dbReference type="KEGG" id="sth:STH2777"/>
<dbReference type="eggNOG" id="COG0377">
    <property type="taxonomic scope" value="Bacteria"/>
</dbReference>
<dbReference type="HOGENOM" id="CLU_055737_7_3_9"/>
<dbReference type="OrthoDB" id="9786737at2"/>
<dbReference type="Proteomes" id="UP000000417">
    <property type="component" value="Chromosome"/>
</dbReference>
<dbReference type="GO" id="GO:0005886">
    <property type="term" value="C:plasma membrane"/>
    <property type="evidence" value="ECO:0007669"/>
    <property type="project" value="UniProtKB-SubCell"/>
</dbReference>
<dbReference type="GO" id="GO:0045271">
    <property type="term" value="C:respiratory chain complex I"/>
    <property type="evidence" value="ECO:0007669"/>
    <property type="project" value="TreeGrafter"/>
</dbReference>
<dbReference type="GO" id="GO:0051539">
    <property type="term" value="F:4 iron, 4 sulfur cluster binding"/>
    <property type="evidence" value="ECO:0007669"/>
    <property type="project" value="UniProtKB-KW"/>
</dbReference>
<dbReference type="GO" id="GO:0005506">
    <property type="term" value="F:iron ion binding"/>
    <property type="evidence" value="ECO:0007669"/>
    <property type="project" value="UniProtKB-UniRule"/>
</dbReference>
<dbReference type="GO" id="GO:0008137">
    <property type="term" value="F:NADH dehydrogenase (ubiquinone) activity"/>
    <property type="evidence" value="ECO:0007669"/>
    <property type="project" value="InterPro"/>
</dbReference>
<dbReference type="GO" id="GO:0050136">
    <property type="term" value="F:NADH:ubiquinone reductase (non-electrogenic) activity"/>
    <property type="evidence" value="ECO:0007669"/>
    <property type="project" value="UniProtKB-UniRule"/>
</dbReference>
<dbReference type="GO" id="GO:0048038">
    <property type="term" value="F:quinone binding"/>
    <property type="evidence" value="ECO:0007669"/>
    <property type="project" value="UniProtKB-KW"/>
</dbReference>
<dbReference type="GO" id="GO:0009060">
    <property type="term" value="P:aerobic respiration"/>
    <property type="evidence" value="ECO:0007669"/>
    <property type="project" value="TreeGrafter"/>
</dbReference>
<dbReference type="GO" id="GO:0015990">
    <property type="term" value="P:electron transport coupled proton transport"/>
    <property type="evidence" value="ECO:0007669"/>
    <property type="project" value="TreeGrafter"/>
</dbReference>
<dbReference type="FunFam" id="3.40.50.12280:FF:000002">
    <property type="entry name" value="NADH-quinone oxidoreductase subunit B"/>
    <property type="match status" value="1"/>
</dbReference>
<dbReference type="Gene3D" id="3.40.50.12280">
    <property type="match status" value="1"/>
</dbReference>
<dbReference type="HAMAP" id="MF_01356">
    <property type="entry name" value="NDH1_NuoB"/>
    <property type="match status" value="1"/>
</dbReference>
<dbReference type="InterPro" id="IPR006137">
    <property type="entry name" value="NADH_UbQ_OxRdtase-like_20kDa"/>
</dbReference>
<dbReference type="InterPro" id="IPR006138">
    <property type="entry name" value="NADH_UQ_OxRdtase_20Kd_su"/>
</dbReference>
<dbReference type="NCBIfam" id="TIGR01957">
    <property type="entry name" value="nuoB_fam"/>
    <property type="match status" value="1"/>
</dbReference>
<dbReference type="NCBIfam" id="NF005012">
    <property type="entry name" value="PRK06411.1"/>
    <property type="match status" value="1"/>
</dbReference>
<dbReference type="PANTHER" id="PTHR11995">
    <property type="entry name" value="NADH DEHYDROGENASE"/>
    <property type="match status" value="1"/>
</dbReference>
<dbReference type="PANTHER" id="PTHR11995:SF14">
    <property type="entry name" value="NADH DEHYDROGENASE [UBIQUINONE] IRON-SULFUR PROTEIN 7, MITOCHONDRIAL"/>
    <property type="match status" value="1"/>
</dbReference>
<dbReference type="Pfam" id="PF01058">
    <property type="entry name" value="Oxidored_q6"/>
    <property type="match status" value="1"/>
</dbReference>
<dbReference type="SUPFAM" id="SSF56770">
    <property type="entry name" value="HydA/Nqo6-like"/>
    <property type="match status" value="1"/>
</dbReference>
<proteinExistence type="inferred from homology"/>
<keyword id="KW-0004">4Fe-4S</keyword>
<keyword id="KW-1003">Cell membrane</keyword>
<keyword id="KW-0408">Iron</keyword>
<keyword id="KW-0411">Iron-sulfur</keyword>
<keyword id="KW-0472">Membrane</keyword>
<keyword id="KW-0479">Metal-binding</keyword>
<keyword id="KW-0520">NAD</keyword>
<keyword id="KW-0874">Quinone</keyword>
<keyword id="KW-1185">Reference proteome</keyword>
<keyword id="KW-1278">Translocase</keyword>
<keyword id="KW-0813">Transport</keyword>
<accession>Q67KN6</accession>
<feature type="chain" id="PRO_0000358487" description="NADH-quinone oxidoreductase subunit B 2">
    <location>
        <begin position="1"/>
        <end position="182"/>
    </location>
</feature>
<feature type="binding site" evidence="1">
    <location>
        <position position="57"/>
    </location>
    <ligand>
        <name>[4Fe-4S] cluster</name>
        <dbReference type="ChEBI" id="CHEBI:49883"/>
    </ligand>
</feature>
<feature type="binding site" evidence="1">
    <location>
        <position position="58"/>
    </location>
    <ligand>
        <name>[4Fe-4S] cluster</name>
        <dbReference type="ChEBI" id="CHEBI:49883"/>
    </ligand>
</feature>
<feature type="binding site" evidence="1">
    <location>
        <position position="123"/>
    </location>
    <ligand>
        <name>[4Fe-4S] cluster</name>
        <dbReference type="ChEBI" id="CHEBI:49883"/>
    </ligand>
</feature>
<feature type="binding site" evidence="1">
    <location>
        <position position="153"/>
    </location>
    <ligand>
        <name>[4Fe-4S] cluster</name>
        <dbReference type="ChEBI" id="CHEBI:49883"/>
    </ligand>
</feature>
<comment type="function">
    <text evidence="1">NDH-1 shuttles electrons from NADH, via FMN and iron-sulfur (Fe-S) centers, to quinones in the respiratory chain. The immediate electron acceptor for the enzyme in this species is believed to be a menaquinone. Couples the redox reaction to proton translocation (for every two electrons transferred, four hydrogen ions are translocated across the cytoplasmic membrane), and thus conserves the redox energy in a proton gradient.</text>
</comment>
<comment type="catalytic activity">
    <reaction evidence="1">
        <text>a quinone + NADH + 5 H(+)(in) = a quinol + NAD(+) + 4 H(+)(out)</text>
        <dbReference type="Rhea" id="RHEA:57888"/>
        <dbReference type="ChEBI" id="CHEBI:15378"/>
        <dbReference type="ChEBI" id="CHEBI:24646"/>
        <dbReference type="ChEBI" id="CHEBI:57540"/>
        <dbReference type="ChEBI" id="CHEBI:57945"/>
        <dbReference type="ChEBI" id="CHEBI:132124"/>
    </reaction>
</comment>
<comment type="cofactor">
    <cofactor evidence="1">
        <name>[4Fe-4S] cluster</name>
        <dbReference type="ChEBI" id="CHEBI:49883"/>
    </cofactor>
    <text evidence="1">Binds 1 [4Fe-4S] cluster.</text>
</comment>
<comment type="subunit">
    <text evidence="1">NDH-1 is composed of 14 different subunits. Subunits NuoB, C, D, E, F, and G constitute the peripheral sector of the complex.</text>
</comment>
<comment type="subcellular location">
    <subcellularLocation>
        <location evidence="1">Cell membrane</location>
        <topology evidence="1">Peripheral membrane protein</topology>
        <orientation evidence="1">Cytoplasmic side</orientation>
    </subcellularLocation>
</comment>
<comment type="similarity">
    <text evidence="1">Belongs to the complex I 20 kDa subunit family.</text>
</comment>